<accession>A6U169</accession>
<proteinExistence type="inferred from homology"/>
<evidence type="ECO:0000255" key="1">
    <source>
        <dbReference type="HAMAP-Rule" id="MF_01037"/>
    </source>
</evidence>
<dbReference type="EC" id="2.1.1.74" evidence="1"/>
<dbReference type="EMBL" id="CP000736">
    <property type="protein sequence ID" value="ABR52187.1"/>
    <property type="molecule type" value="Genomic_DNA"/>
</dbReference>
<dbReference type="SMR" id="A6U169"/>
<dbReference type="KEGG" id="sah:SaurJH1_1336"/>
<dbReference type="HOGENOM" id="CLU_033057_1_0_9"/>
<dbReference type="GO" id="GO:0005829">
    <property type="term" value="C:cytosol"/>
    <property type="evidence" value="ECO:0007669"/>
    <property type="project" value="TreeGrafter"/>
</dbReference>
<dbReference type="GO" id="GO:0050660">
    <property type="term" value="F:flavin adenine dinucleotide binding"/>
    <property type="evidence" value="ECO:0007669"/>
    <property type="project" value="UniProtKB-UniRule"/>
</dbReference>
<dbReference type="GO" id="GO:0047151">
    <property type="term" value="F:tRNA (uracil(54)-C5)-methyltransferase activity, 5,10-methylenetetrahydrofolate-dependent"/>
    <property type="evidence" value="ECO:0007669"/>
    <property type="project" value="UniProtKB-UniRule"/>
</dbReference>
<dbReference type="GO" id="GO:0030488">
    <property type="term" value="P:tRNA methylation"/>
    <property type="evidence" value="ECO:0007669"/>
    <property type="project" value="TreeGrafter"/>
</dbReference>
<dbReference type="GO" id="GO:0002098">
    <property type="term" value="P:tRNA wobble uridine modification"/>
    <property type="evidence" value="ECO:0007669"/>
    <property type="project" value="TreeGrafter"/>
</dbReference>
<dbReference type="FunFam" id="3.50.50.60:FF:000035">
    <property type="entry name" value="Methylenetetrahydrofolate--tRNA-(uracil-5-)-methyltransferase TrmFO"/>
    <property type="match status" value="1"/>
</dbReference>
<dbReference type="FunFam" id="3.50.50.60:FF:000040">
    <property type="entry name" value="Methylenetetrahydrofolate--tRNA-(uracil-5-)-methyltransferase TrmFO"/>
    <property type="match status" value="1"/>
</dbReference>
<dbReference type="Gene3D" id="3.50.50.60">
    <property type="entry name" value="FAD/NAD(P)-binding domain"/>
    <property type="match status" value="2"/>
</dbReference>
<dbReference type="HAMAP" id="MF_01037">
    <property type="entry name" value="TrmFO"/>
    <property type="match status" value="1"/>
</dbReference>
<dbReference type="InterPro" id="IPR036188">
    <property type="entry name" value="FAD/NAD-bd_sf"/>
</dbReference>
<dbReference type="InterPro" id="IPR002218">
    <property type="entry name" value="MnmG-rel"/>
</dbReference>
<dbReference type="InterPro" id="IPR020595">
    <property type="entry name" value="MnmG-rel_CS"/>
</dbReference>
<dbReference type="InterPro" id="IPR040131">
    <property type="entry name" value="MnmG_N"/>
</dbReference>
<dbReference type="InterPro" id="IPR004417">
    <property type="entry name" value="TrmFO"/>
</dbReference>
<dbReference type="NCBIfam" id="TIGR00137">
    <property type="entry name" value="gid_trmFO"/>
    <property type="match status" value="1"/>
</dbReference>
<dbReference type="NCBIfam" id="NF003739">
    <property type="entry name" value="PRK05335.1"/>
    <property type="match status" value="1"/>
</dbReference>
<dbReference type="PANTHER" id="PTHR11806">
    <property type="entry name" value="GLUCOSE INHIBITED DIVISION PROTEIN A"/>
    <property type="match status" value="1"/>
</dbReference>
<dbReference type="PANTHER" id="PTHR11806:SF2">
    <property type="entry name" value="METHYLENETETRAHYDROFOLATE--TRNA-(URACIL-5-)-METHYLTRANSFERASE TRMFO"/>
    <property type="match status" value="1"/>
</dbReference>
<dbReference type="Pfam" id="PF01134">
    <property type="entry name" value="GIDA"/>
    <property type="match status" value="1"/>
</dbReference>
<dbReference type="SUPFAM" id="SSF51905">
    <property type="entry name" value="FAD/NAD(P)-binding domain"/>
    <property type="match status" value="1"/>
</dbReference>
<dbReference type="PROSITE" id="PS01281">
    <property type="entry name" value="GIDA_2"/>
    <property type="match status" value="1"/>
</dbReference>
<reference key="1">
    <citation type="submission" date="2007-06" db="EMBL/GenBank/DDBJ databases">
        <title>Complete sequence of chromosome of Staphylococcus aureus subsp. aureus JH1.</title>
        <authorList>
            <consortium name="US DOE Joint Genome Institute"/>
            <person name="Copeland A."/>
            <person name="Lucas S."/>
            <person name="Lapidus A."/>
            <person name="Barry K."/>
            <person name="Detter J.C."/>
            <person name="Glavina del Rio T."/>
            <person name="Hammon N."/>
            <person name="Israni S."/>
            <person name="Dalin E."/>
            <person name="Tice H."/>
            <person name="Pitluck S."/>
            <person name="Chain P."/>
            <person name="Malfatti S."/>
            <person name="Shin M."/>
            <person name="Vergez L."/>
            <person name="Schmutz J."/>
            <person name="Larimer F."/>
            <person name="Land M."/>
            <person name="Hauser L."/>
            <person name="Kyrpides N."/>
            <person name="Ivanova N."/>
            <person name="Tomasz A."/>
            <person name="Richardson P."/>
        </authorList>
    </citation>
    <scope>NUCLEOTIDE SEQUENCE [LARGE SCALE GENOMIC DNA]</scope>
    <source>
        <strain>JH1</strain>
    </source>
</reference>
<keyword id="KW-0963">Cytoplasm</keyword>
<keyword id="KW-0274">FAD</keyword>
<keyword id="KW-0285">Flavoprotein</keyword>
<keyword id="KW-0489">Methyltransferase</keyword>
<keyword id="KW-0520">NAD</keyword>
<keyword id="KW-0521">NADP</keyword>
<keyword id="KW-0808">Transferase</keyword>
<keyword id="KW-0819">tRNA processing</keyword>
<comment type="function">
    <text evidence="1">Catalyzes the folate-dependent formation of 5-methyl-uridine at position 54 (M-5-U54) in all tRNAs.</text>
</comment>
<comment type="catalytic activity">
    <reaction evidence="1">
        <text>uridine(54) in tRNA + (6R)-5,10-methylene-5,6,7,8-tetrahydrofolate + NADH + H(+) = 5-methyluridine(54) in tRNA + (6S)-5,6,7,8-tetrahydrofolate + NAD(+)</text>
        <dbReference type="Rhea" id="RHEA:16873"/>
        <dbReference type="Rhea" id="RHEA-COMP:10167"/>
        <dbReference type="Rhea" id="RHEA-COMP:10193"/>
        <dbReference type="ChEBI" id="CHEBI:15378"/>
        <dbReference type="ChEBI" id="CHEBI:15636"/>
        <dbReference type="ChEBI" id="CHEBI:57453"/>
        <dbReference type="ChEBI" id="CHEBI:57540"/>
        <dbReference type="ChEBI" id="CHEBI:57945"/>
        <dbReference type="ChEBI" id="CHEBI:65315"/>
        <dbReference type="ChEBI" id="CHEBI:74447"/>
        <dbReference type="EC" id="2.1.1.74"/>
    </reaction>
</comment>
<comment type="catalytic activity">
    <reaction evidence="1">
        <text>uridine(54) in tRNA + (6R)-5,10-methylene-5,6,7,8-tetrahydrofolate + NADPH + H(+) = 5-methyluridine(54) in tRNA + (6S)-5,6,7,8-tetrahydrofolate + NADP(+)</text>
        <dbReference type="Rhea" id="RHEA:62372"/>
        <dbReference type="Rhea" id="RHEA-COMP:10167"/>
        <dbReference type="Rhea" id="RHEA-COMP:10193"/>
        <dbReference type="ChEBI" id="CHEBI:15378"/>
        <dbReference type="ChEBI" id="CHEBI:15636"/>
        <dbReference type="ChEBI" id="CHEBI:57453"/>
        <dbReference type="ChEBI" id="CHEBI:57783"/>
        <dbReference type="ChEBI" id="CHEBI:58349"/>
        <dbReference type="ChEBI" id="CHEBI:65315"/>
        <dbReference type="ChEBI" id="CHEBI:74447"/>
        <dbReference type="EC" id="2.1.1.74"/>
    </reaction>
</comment>
<comment type="cofactor">
    <cofactor evidence="1">
        <name>FAD</name>
        <dbReference type="ChEBI" id="CHEBI:57692"/>
    </cofactor>
</comment>
<comment type="subcellular location">
    <subcellularLocation>
        <location evidence="1">Cytoplasm</location>
    </subcellularLocation>
</comment>
<comment type="similarity">
    <text evidence="1">Belongs to the MnmG family. TrmFO subfamily.</text>
</comment>
<feature type="chain" id="PRO_1000084290" description="Methylenetetrahydrofolate--tRNA-(uracil-5-)-methyltransferase TrmFO">
    <location>
        <begin position="1"/>
        <end position="435"/>
    </location>
</feature>
<feature type="binding site" evidence="1">
    <location>
        <begin position="9"/>
        <end position="14"/>
    </location>
    <ligand>
        <name>FAD</name>
        <dbReference type="ChEBI" id="CHEBI:57692"/>
    </ligand>
</feature>
<name>TRMFO_STAA2</name>
<sequence>MTQTVNVIGAGLAGSEAAYQLAERGIKVNLIEMRPVKQTPAHHTDKFAELVCSNSLRGNALTNGVGVLKEEMRRLNSIIIEAADKARVPAGGALAVDRHDFSGYITETLKNHENITVINEEINAIPDGYTIIATGPLTTETLAQEIVDITGKDQLYFYDAAAPIIEKESIDMDKVYLKSRYDKGEAAYLNCPMTEDEFNRFYDAVLEAEVAPVNSFEKEKYFEGCMPFEVMAERGRKTLLFGPMKPVGLEDPKTGKRPYAVVQLRQDDAAGTLYNIVGFQTHLKWGAQKEVIKLIPGLENVDIVRYGVMHRNTFINSPDVLNEKYELISQPNIQFAGQMTGVEGYVESAASGLVAGINLAHKILGKGEVVFPRETMIGSMAYYISHAKNNKNFQPMNANFGLLPSLETRIKDKKERYEAQANRALDYLKNFKKTL</sequence>
<organism>
    <name type="scientific">Staphylococcus aureus (strain JH1)</name>
    <dbReference type="NCBI Taxonomy" id="359787"/>
    <lineage>
        <taxon>Bacteria</taxon>
        <taxon>Bacillati</taxon>
        <taxon>Bacillota</taxon>
        <taxon>Bacilli</taxon>
        <taxon>Bacillales</taxon>
        <taxon>Staphylococcaceae</taxon>
        <taxon>Staphylococcus</taxon>
    </lineage>
</organism>
<gene>
    <name evidence="1" type="primary">trmFO</name>
    <name type="synonym">gid</name>
    <name type="ordered locus">SaurJH1_1336</name>
</gene>
<protein>
    <recommendedName>
        <fullName evidence="1">Methylenetetrahydrofolate--tRNA-(uracil-5-)-methyltransferase TrmFO</fullName>
        <ecNumber evidence="1">2.1.1.74</ecNumber>
    </recommendedName>
    <alternativeName>
        <fullName evidence="1">Folate-dependent tRNA (uracil-5-)-methyltransferase</fullName>
    </alternativeName>
    <alternativeName>
        <fullName evidence="1">Folate-dependent tRNA(M-5-U54)-methyltransferase</fullName>
    </alternativeName>
</protein>